<accession>P9WN65</accession>
<accession>L0TFH5</accession>
<accession>O06329</accession>
<accession>Q7D5I4</accession>
<protein>
    <recommendedName>
        <fullName evidence="2">dTDP-glucose 4,6-dehydratase</fullName>
        <ecNumber evidence="2">4.2.1.46</ecNumber>
    </recommendedName>
</protein>
<proteinExistence type="evidence at protein level"/>
<keyword id="KW-0456">Lyase</keyword>
<keyword id="KW-0520">NAD</keyword>
<keyword id="KW-1185">Reference proteome</keyword>
<gene>
    <name type="primary">rmlB</name>
    <name type="synonym">rfbB</name>
    <name type="ordered locus">Rv3464</name>
</gene>
<evidence type="ECO:0000250" key="1">
    <source>
        <dbReference type="UniProtKB" id="P26391"/>
    </source>
</evidence>
<evidence type="ECO:0000250" key="2">
    <source>
        <dbReference type="UniProtKB" id="P27830"/>
    </source>
</evidence>
<evidence type="ECO:0000250" key="3">
    <source>
        <dbReference type="UniProtKB" id="P95780"/>
    </source>
</evidence>
<evidence type="ECO:0000269" key="4">
    <source>
    </source>
</evidence>
<evidence type="ECO:0000305" key="5"/>
<evidence type="ECO:0000305" key="6">
    <source>
    </source>
</evidence>
<name>RMLB_MYCTU</name>
<comment type="function">
    <text evidence="2 4">Catalyzes the dehydration of dTDP-D-glucose to form dTDP-6-deoxy-D-xylo-4-hexulose via a three-step process involving oxidation, dehydration and reduction (By similarity). Involved in the biosynthesis of the dTDP-L-rhamnose which is a component of the critical linker, D-N-acetylglucosamine-L-rhamnose disaccharide, which connects the galactan region of arabinogalactan to peptidoglycan via a phosphodiester linkage (PubMed:16472764).</text>
</comment>
<comment type="catalytic activity">
    <reaction evidence="2">
        <text>dTDP-alpha-D-glucose = dTDP-4-dehydro-6-deoxy-alpha-D-glucose + H2O</text>
        <dbReference type="Rhea" id="RHEA:17221"/>
        <dbReference type="ChEBI" id="CHEBI:15377"/>
        <dbReference type="ChEBI" id="CHEBI:57477"/>
        <dbReference type="ChEBI" id="CHEBI:57649"/>
        <dbReference type="EC" id="4.2.1.46"/>
    </reaction>
</comment>
<comment type="cofactor">
    <cofactor evidence="2">
        <name>NAD(+)</name>
        <dbReference type="ChEBI" id="CHEBI:57540"/>
    </cofactor>
    <text evidence="2">Binds 1 NAD(+) per subunit.</text>
</comment>
<comment type="pathway">
    <text evidence="6">Carbohydrate biosynthesis; dTDP-L-rhamnose biosynthesis.</text>
</comment>
<comment type="subunit">
    <text evidence="2">Homodimer.</text>
</comment>
<comment type="similarity">
    <text evidence="5">Belongs to the NAD(P)-dependent epimerase/dehydratase family. dTDP-glucose dehydratase subfamily.</text>
</comment>
<organism>
    <name type="scientific">Mycobacterium tuberculosis (strain ATCC 25618 / H37Rv)</name>
    <dbReference type="NCBI Taxonomy" id="83332"/>
    <lineage>
        <taxon>Bacteria</taxon>
        <taxon>Bacillati</taxon>
        <taxon>Actinomycetota</taxon>
        <taxon>Actinomycetes</taxon>
        <taxon>Mycobacteriales</taxon>
        <taxon>Mycobacteriaceae</taxon>
        <taxon>Mycobacterium</taxon>
        <taxon>Mycobacterium tuberculosis complex</taxon>
    </lineage>
</organism>
<feature type="chain" id="PRO_0000395348" description="dTDP-glucose 4,6-dehydratase">
    <location>
        <begin position="1"/>
        <end position="331"/>
    </location>
</feature>
<feature type="active site" description="Proton donor" evidence="2">
    <location>
        <position position="121"/>
    </location>
</feature>
<feature type="active site" description="Proton acceptor" evidence="2">
    <location>
        <position position="122"/>
    </location>
</feature>
<feature type="active site" description="Proton acceptor" evidence="2">
    <location>
        <position position="147"/>
    </location>
</feature>
<feature type="binding site" evidence="2">
    <location>
        <begin position="11"/>
        <end position="12"/>
    </location>
    <ligand>
        <name>NAD(+)</name>
        <dbReference type="ChEBI" id="CHEBI:57540"/>
    </ligand>
</feature>
<feature type="binding site" evidence="2">
    <location>
        <begin position="33"/>
        <end position="36"/>
    </location>
    <ligand>
        <name>NAD(+)</name>
        <dbReference type="ChEBI" id="CHEBI:57540"/>
    </ligand>
</feature>
<feature type="binding site" evidence="2">
    <location>
        <begin position="57"/>
        <end position="58"/>
    </location>
    <ligand>
        <name>NAD(+)</name>
        <dbReference type="ChEBI" id="CHEBI:57540"/>
    </ligand>
</feature>
<feature type="binding site" evidence="2">
    <location>
        <begin position="77"/>
        <end position="81"/>
    </location>
    <ligand>
        <name>NAD(+)</name>
        <dbReference type="ChEBI" id="CHEBI:57540"/>
    </ligand>
</feature>
<feature type="binding site" evidence="1">
    <location>
        <position position="81"/>
    </location>
    <ligand>
        <name>substrate</name>
    </ligand>
</feature>
<feature type="binding site" evidence="2">
    <location>
        <position position="96"/>
    </location>
    <ligand>
        <name>NAD(+)</name>
        <dbReference type="ChEBI" id="CHEBI:57540"/>
    </ligand>
</feature>
<feature type="binding site" evidence="1">
    <location>
        <position position="120"/>
    </location>
    <ligand>
        <name>substrate</name>
    </ligand>
</feature>
<feature type="binding site" evidence="2">
    <location>
        <begin position="147"/>
        <end position="151"/>
    </location>
    <ligand>
        <name>NAD(+)</name>
        <dbReference type="ChEBI" id="CHEBI:57540"/>
    </ligand>
</feature>
<feature type="binding site" evidence="1">
    <location>
        <position position="176"/>
    </location>
    <ligand>
        <name>substrate</name>
    </ligand>
</feature>
<feature type="binding site" evidence="2">
    <location>
        <position position="177"/>
    </location>
    <ligand>
        <name>NAD(+)</name>
        <dbReference type="ChEBI" id="CHEBI:57540"/>
    </ligand>
</feature>
<feature type="binding site" evidence="3">
    <location>
        <begin position="186"/>
        <end position="191"/>
    </location>
    <ligand>
        <name>substrate</name>
    </ligand>
</feature>
<feature type="binding site" evidence="3">
    <location>
        <begin position="202"/>
        <end position="204"/>
    </location>
    <ligand>
        <name>substrate</name>
    </ligand>
</feature>
<feature type="binding site" evidence="1">
    <location>
        <position position="211"/>
    </location>
    <ligand>
        <name>substrate</name>
    </ligand>
</feature>
<feature type="binding site" evidence="1">
    <location>
        <position position="246"/>
    </location>
    <ligand>
        <name>substrate</name>
    </ligand>
</feature>
<feature type="binding site" evidence="1">
    <location>
        <begin position="269"/>
        <end position="273"/>
    </location>
    <ligand>
        <name>substrate</name>
    </ligand>
</feature>
<dbReference type="EC" id="4.2.1.46" evidence="2"/>
<dbReference type="EMBL" id="AL123456">
    <property type="protein sequence ID" value="CCP46286.1"/>
    <property type="molecule type" value="Genomic_DNA"/>
</dbReference>
<dbReference type="PIR" id="E70566">
    <property type="entry name" value="E70566"/>
</dbReference>
<dbReference type="RefSeq" id="NP_217981.1">
    <property type="nucleotide sequence ID" value="NC_000962.3"/>
</dbReference>
<dbReference type="RefSeq" id="WP_003418607.1">
    <property type="nucleotide sequence ID" value="NZ_NVQJ01000091.1"/>
</dbReference>
<dbReference type="SMR" id="P9WN65"/>
<dbReference type="FunCoup" id="P9WN65">
    <property type="interactions" value="292"/>
</dbReference>
<dbReference type="STRING" id="83332.Rv3464"/>
<dbReference type="PaxDb" id="83332-Rv3464"/>
<dbReference type="DNASU" id="887332"/>
<dbReference type="GeneID" id="887332"/>
<dbReference type="KEGG" id="mtu:Rv3464"/>
<dbReference type="KEGG" id="mtv:RVBD_3464"/>
<dbReference type="TubercuList" id="Rv3464"/>
<dbReference type="eggNOG" id="COG1088">
    <property type="taxonomic scope" value="Bacteria"/>
</dbReference>
<dbReference type="InParanoid" id="P9WN65"/>
<dbReference type="OrthoDB" id="9801785at2"/>
<dbReference type="PhylomeDB" id="P9WN65"/>
<dbReference type="BRENDA" id="4.2.1.46">
    <property type="organism ID" value="3445"/>
</dbReference>
<dbReference type="UniPathway" id="UPA00124"/>
<dbReference type="Proteomes" id="UP000001584">
    <property type="component" value="Chromosome"/>
</dbReference>
<dbReference type="GO" id="GO:0009274">
    <property type="term" value="C:peptidoglycan-based cell wall"/>
    <property type="evidence" value="ECO:0007005"/>
    <property type="project" value="MTBBASE"/>
</dbReference>
<dbReference type="GO" id="GO:0008460">
    <property type="term" value="F:dTDP-glucose 4,6-dehydratase activity"/>
    <property type="evidence" value="ECO:0000314"/>
    <property type="project" value="MTBBASE"/>
</dbReference>
<dbReference type="GO" id="GO:0070404">
    <property type="term" value="F:NADH binding"/>
    <property type="evidence" value="ECO:0000250"/>
    <property type="project" value="UniProtKB"/>
</dbReference>
<dbReference type="GO" id="GO:0019305">
    <property type="term" value="P:dTDP-rhamnose biosynthetic process"/>
    <property type="evidence" value="ECO:0000314"/>
    <property type="project" value="MTBBASE"/>
</dbReference>
<dbReference type="GO" id="GO:0000271">
    <property type="term" value="P:polysaccharide biosynthetic process"/>
    <property type="evidence" value="ECO:0000316"/>
    <property type="project" value="UniProtKB"/>
</dbReference>
<dbReference type="CDD" id="cd05246">
    <property type="entry name" value="dTDP_GD_SDR_e"/>
    <property type="match status" value="1"/>
</dbReference>
<dbReference type="Gene3D" id="3.40.50.720">
    <property type="entry name" value="NAD(P)-binding Rossmann-like Domain"/>
    <property type="match status" value="1"/>
</dbReference>
<dbReference type="Gene3D" id="3.90.25.10">
    <property type="entry name" value="UDP-galactose 4-epimerase, domain 1"/>
    <property type="match status" value="1"/>
</dbReference>
<dbReference type="InterPro" id="IPR005888">
    <property type="entry name" value="dTDP_Gluc_deHydtase"/>
</dbReference>
<dbReference type="InterPro" id="IPR016040">
    <property type="entry name" value="NAD(P)-bd_dom"/>
</dbReference>
<dbReference type="InterPro" id="IPR036291">
    <property type="entry name" value="NAD(P)-bd_dom_sf"/>
</dbReference>
<dbReference type="NCBIfam" id="TIGR01181">
    <property type="entry name" value="dTDP_gluc_dehyt"/>
    <property type="match status" value="1"/>
</dbReference>
<dbReference type="PANTHER" id="PTHR43000">
    <property type="entry name" value="DTDP-D-GLUCOSE 4,6-DEHYDRATASE-RELATED"/>
    <property type="match status" value="1"/>
</dbReference>
<dbReference type="Pfam" id="PF16363">
    <property type="entry name" value="GDP_Man_Dehyd"/>
    <property type="match status" value="1"/>
</dbReference>
<dbReference type="SUPFAM" id="SSF51735">
    <property type="entry name" value="NAD(P)-binding Rossmann-fold domains"/>
    <property type="match status" value="1"/>
</dbReference>
<sequence>MRLLVTGGAGFIGTNFVHSAVREHPDDAVTVLDALTYAGRRESLADVEDAIRLVQGDITDAELVSQLVAESDAVVHFAAESHVDNALDNPEPFLHTNVIGTFTILEAVRRHGVRLHHISTDEVYGDLELDDRARFTESTPYNPSSPYSATKAGADMLVRAWVRSYGVRATISNCSNNYGPYQHVEKFIPRQITNVLTGRRPKLYGAGANVRDWIHVDDHNSAVRRILDRGRIGRTYLISSEGERDNLTVLRTLLRLMDRDPDDFDHVTDRVGHDLRYAIDPSTLYDELCWAPKHTDFEEGLRTTIDWYRDNESWWRPLKDATEARYQERGQ</sequence>
<reference key="1">
    <citation type="journal article" date="1998" name="Nature">
        <title>Deciphering the biology of Mycobacterium tuberculosis from the complete genome sequence.</title>
        <authorList>
            <person name="Cole S.T."/>
            <person name="Brosch R."/>
            <person name="Parkhill J."/>
            <person name="Garnier T."/>
            <person name="Churcher C.M."/>
            <person name="Harris D.E."/>
            <person name="Gordon S.V."/>
            <person name="Eiglmeier K."/>
            <person name="Gas S."/>
            <person name="Barry C.E. III"/>
            <person name="Tekaia F."/>
            <person name="Badcock K."/>
            <person name="Basham D."/>
            <person name="Brown D."/>
            <person name="Chillingworth T."/>
            <person name="Connor R."/>
            <person name="Davies R.M."/>
            <person name="Devlin K."/>
            <person name="Feltwell T."/>
            <person name="Gentles S."/>
            <person name="Hamlin N."/>
            <person name="Holroyd S."/>
            <person name="Hornsby T."/>
            <person name="Jagels K."/>
            <person name="Krogh A."/>
            <person name="McLean J."/>
            <person name="Moule S."/>
            <person name="Murphy L.D."/>
            <person name="Oliver S."/>
            <person name="Osborne J."/>
            <person name="Quail M.A."/>
            <person name="Rajandream M.A."/>
            <person name="Rogers J."/>
            <person name="Rutter S."/>
            <person name="Seeger K."/>
            <person name="Skelton S."/>
            <person name="Squares S."/>
            <person name="Squares R."/>
            <person name="Sulston J.E."/>
            <person name="Taylor K."/>
            <person name="Whitehead S."/>
            <person name="Barrell B.G."/>
        </authorList>
    </citation>
    <scope>NUCLEOTIDE SEQUENCE [LARGE SCALE GENOMIC DNA]</scope>
    <source>
        <strain>ATCC 25618 / H37Rv</strain>
    </source>
</reference>
<reference key="2">
    <citation type="journal article" date="2006" name="Biochem. Biophys. Res. Commun.">
        <title>rmlB and rmlC genes are essential for growth of mycobacteria.</title>
        <authorList>
            <person name="Li W."/>
            <person name="Xin Y."/>
            <person name="McNeil M.R."/>
            <person name="Ma Y."/>
        </authorList>
    </citation>
    <scope>FUNCTION IN DTDP-RHAMNOSE BIOSYNTHESIS</scope>
    <scope>PATHWAY</scope>
    <source>
        <strain>ATCC 25618 / H37Rv</strain>
    </source>
</reference>
<reference key="3">
    <citation type="journal article" date="2011" name="Mol. Cell. Proteomics">
        <title>Proteogenomic analysis of Mycobacterium tuberculosis by high resolution mass spectrometry.</title>
        <authorList>
            <person name="Kelkar D.S."/>
            <person name="Kumar D."/>
            <person name="Kumar P."/>
            <person name="Balakrishnan L."/>
            <person name="Muthusamy B."/>
            <person name="Yadav A.K."/>
            <person name="Shrivastava P."/>
            <person name="Marimuthu A."/>
            <person name="Anand S."/>
            <person name="Sundaram H."/>
            <person name="Kingsbury R."/>
            <person name="Harsha H.C."/>
            <person name="Nair B."/>
            <person name="Prasad T.S."/>
            <person name="Chauhan D.S."/>
            <person name="Katoch K."/>
            <person name="Katoch V.M."/>
            <person name="Kumar P."/>
            <person name="Chaerkady R."/>
            <person name="Ramachandran S."/>
            <person name="Dash D."/>
            <person name="Pandey A."/>
        </authorList>
    </citation>
    <scope>IDENTIFICATION BY MASS SPECTROMETRY [LARGE SCALE ANALYSIS]</scope>
    <source>
        <strain>ATCC 25618 / H37Rv</strain>
    </source>
</reference>